<keyword id="KW-0249">Electron transport</keyword>
<keyword id="KW-0472">Membrane</keyword>
<keyword id="KW-0496">Mitochondrion</keyword>
<keyword id="KW-0999">Mitochondrion inner membrane</keyword>
<keyword id="KW-0520">NAD</keyword>
<keyword id="KW-1185">Reference proteome</keyword>
<keyword id="KW-0679">Respiratory chain</keyword>
<keyword id="KW-1278">Translocase</keyword>
<keyword id="KW-0812">Transmembrane</keyword>
<keyword id="KW-1133">Transmembrane helix</keyword>
<keyword id="KW-0813">Transport</keyword>
<keyword id="KW-0830">Ubiquinone</keyword>
<protein>
    <recommendedName>
        <fullName>NADH-ubiquinone oxidoreductase chain 4L</fullName>
        <ecNumber>7.1.1.2</ecNumber>
    </recommendedName>
    <alternativeName>
        <fullName>NADH dehydrogenase subunit 4L</fullName>
    </alternativeName>
</protein>
<reference key="1">
    <citation type="journal article" date="2004" name="Gene">
        <title>Analysis of the mitochondrial genome of cheetahs (Acinonyx jubatus) with neurodegenerative disease.</title>
        <authorList>
            <person name="Burger P.A."/>
            <person name="Steinborn R."/>
            <person name="Walzer C."/>
            <person name="Petit T."/>
            <person name="Mueller M."/>
            <person name="Schwarzenberger F."/>
        </authorList>
    </citation>
    <scope>NUCLEOTIDE SEQUENCE [GENOMIC DNA]</scope>
    <source>
        <strain>Isolate AJ-4050</strain>
        <strain>Isolate AJ-4237</strain>
        <tissue>Liver</tissue>
    </source>
</reference>
<gene>
    <name type="primary">MT-ND4L</name>
    <name type="synonym">MTND4L</name>
    <name type="synonym">NADH4L</name>
    <name type="synonym">ND4L</name>
</gene>
<accession>Q71RU5</accession>
<feature type="chain" id="PRO_0000274967" description="NADH-ubiquinone oxidoreductase chain 4L">
    <location>
        <begin position="1"/>
        <end position="98"/>
    </location>
</feature>
<feature type="transmembrane region" description="Helical" evidence="3">
    <location>
        <begin position="1"/>
        <end position="21"/>
    </location>
</feature>
<feature type="transmembrane region" description="Helical" evidence="3">
    <location>
        <begin position="29"/>
        <end position="49"/>
    </location>
</feature>
<feature type="transmembrane region" description="Helical" evidence="3">
    <location>
        <begin position="61"/>
        <end position="81"/>
    </location>
</feature>
<name>NU4LM_ACIJB</name>
<dbReference type="EC" id="7.1.1.2"/>
<dbReference type="EMBL" id="AF344830">
    <property type="protein sequence ID" value="AAQ14960.1"/>
    <property type="molecule type" value="Genomic_DNA"/>
</dbReference>
<dbReference type="EMBL" id="AY463959">
    <property type="protein sequence ID" value="AAR19075.1"/>
    <property type="molecule type" value="Genomic_DNA"/>
</dbReference>
<dbReference type="RefSeq" id="NP_941386.1">
    <property type="nucleotide sequence ID" value="NC_005212.1"/>
</dbReference>
<dbReference type="SMR" id="Q71RU5"/>
<dbReference type="GeneID" id="2654023"/>
<dbReference type="KEGG" id="aju:2654023"/>
<dbReference type="CTD" id="4539"/>
<dbReference type="Proteomes" id="UP000504626">
    <property type="component" value="Mitochondrion MT"/>
</dbReference>
<dbReference type="GO" id="GO:0005743">
    <property type="term" value="C:mitochondrial inner membrane"/>
    <property type="evidence" value="ECO:0000250"/>
    <property type="project" value="UniProtKB"/>
</dbReference>
<dbReference type="GO" id="GO:0045271">
    <property type="term" value="C:respiratory chain complex I"/>
    <property type="evidence" value="ECO:0000250"/>
    <property type="project" value="UniProtKB"/>
</dbReference>
<dbReference type="GO" id="GO:0008137">
    <property type="term" value="F:NADH dehydrogenase (ubiquinone) activity"/>
    <property type="evidence" value="ECO:0000250"/>
    <property type="project" value="UniProtKB"/>
</dbReference>
<dbReference type="GO" id="GO:0042773">
    <property type="term" value="P:ATP synthesis coupled electron transport"/>
    <property type="evidence" value="ECO:0007669"/>
    <property type="project" value="InterPro"/>
</dbReference>
<dbReference type="FunFam" id="1.10.287.3510:FF:000002">
    <property type="entry name" value="NADH-ubiquinone oxidoreductase chain 4L"/>
    <property type="match status" value="1"/>
</dbReference>
<dbReference type="Gene3D" id="1.10.287.3510">
    <property type="match status" value="1"/>
</dbReference>
<dbReference type="InterPro" id="IPR001133">
    <property type="entry name" value="NADH_UbQ_OxRdtase_chain4L/K"/>
</dbReference>
<dbReference type="InterPro" id="IPR039428">
    <property type="entry name" value="NUOK/Mnh_C1-like"/>
</dbReference>
<dbReference type="PANTHER" id="PTHR11434:SF0">
    <property type="entry name" value="NADH-UBIQUINONE OXIDOREDUCTASE CHAIN 4L"/>
    <property type="match status" value="1"/>
</dbReference>
<dbReference type="PANTHER" id="PTHR11434">
    <property type="entry name" value="NADH-UBIQUINONE OXIDOREDUCTASE SUBUNIT ND4L"/>
    <property type="match status" value="1"/>
</dbReference>
<dbReference type="Pfam" id="PF00420">
    <property type="entry name" value="Oxidored_q2"/>
    <property type="match status" value="1"/>
</dbReference>
<sequence length="98" mass="10956">MSMVYINIFLAFIMSLMGLLMYRSHLMSSLLCLEGMMLSLFIMMTMVVLNNHFTLASMTPIILLVFAACEAALGLSLLVMVSNTYGTDYVQNLNLLQC</sequence>
<geneLocation type="mitochondrion"/>
<proteinExistence type="inferred from homology"/>
<evidence type="ECO:0000250" key="1">
    <source>
        <dbReference type="UniProtKB" id="P03901"/>
    </source>
</evidence>
<evidence type="ECO:0000250" key="2">
    <source>
        <dbReference type="UniProtKB" id="P03902"/>
    </source>
</evidence>
<evidence type="ECO:0000255" key="3"/>
<evidence type="ECO:0000305" key="4"/>
<comment type="function">
    <text evidence="1">Core subunit of the mitochondrial membrane respiratory chain NADH dehydrogenase (Complex I) which catalyzes electron transfer from NADH through the respiratory chain, using ubiquinone as an electron acceptor. Part of the enzyme membrane arm which is embedded in the lipid bilayer and involved in proton translocation.</text>
</comment>
<comment type="catalytic activity">
    <reaction evidence="1">
        <text>a ubiquinone + NADH + 5 H(+)(in) = a ubiquinol + NAD(+) + 4 H(+)(out)</text>
        <dbReference type="Rhea" id="RHEA:29091"/>
        <dbReference type="Rhea" id="RHEA-COMP:9565"/>
        <dbReference type="Rhea" id="RHEA-COMP:9566"/>
        <dbReference type="ChEBI" id="CHEBI:15378"/>
        <dbReference type="ChEBI" id="CHEBI:16389"/>
        <dbReference type="ChEBI" id="CHEBI:17976"/>
        <dbReference type="ChEBI" id="CHEBI:57540"/>
        <dbReference type="ChEBI" id="CHEBI:57945"/>
        <dbReference type="EC" id="7.1.1.2"/>
    </reaction>
    <physiologicalReaction direction="left-to-right" evidence="1">
        <dbReference type="Rhea" id="RHEA:29092"/>
    </physiologicalReaction>
</comment>
<comment type="subunit">
    <text evidence="2">Core subunit of respiratory chain NADH dehydrogenase (Complex I) which is composed of 45 different subunits.</text>
</comment>
<comment type="subcellular location">
    <subcellularLocation>
        <location evidence="2">Mitochondrion inner membrane</location>
        <topology evidence="3">Multi-pass membrane protein</topology>
    </subcellularLocation>
</comment>
<comment type="similarity">
    <text evidence="4">Belongs to the complex I subunit 4L family.</text>
</comment>
<organism>
    <name type="scientific">Acinonyx jubatus</name>
    <name type="common">Cheetah</name>
    <dbReference type="NCBI Taxonomy" id="32536"/>
    <lineage>
        <taxon>Eukaryota</taxon>
        <taxon>Metazoa</taxon>
        <taxon>Chordata</taxon>
        <taxon>Craniata</taxon>
        <taxon>Vertebrata</taxon>
        <taxon>Euteleostomi</taxon>
        <taxon>Mammalia</taxon>
        <taxon>Eutheria</taxon>
        <taxon>Laurasiatheria</taxon>
        <taxon>Carnivora</taxon>
        <taxon>Feliformia</taxon>
        <taxon>Felidae</taxon>
        <taxon>Felinae</taxon>
        <taxon>Acinonyx</taxon>
    </lineage>
</organism>